<reference key="1">
    <citation type="journal article" date="2003" name="Proc. Natl. Acad. Sci. U.S.A.">
        <title>The complete genome sequence of Mycobacterium bovis.</title>
        <authorList>
            <person name="Garnier T."/>
            <person name="Eiglmeier K."/>
            <person name="Camus J.-C."/>
            <person name="Medina N."/>
            <person name="Mansoor H."/>
            <person name="Pryor M."/>
            <person name="Duthoy S."/>
            <person name="Grondin S."/>
            <person name="Lacroix C."/>
            <person name="Monsempe C."/>
            <person name="Simon S."/>
            <person name="Harris B."/>
            <person name="Atkin R."/>
            <person name="Doggett J."/>
            <person name="Mayes R."/>
            <person name="Keating L."/>
            <person name="Wheeler P.R."/>
            <person name="Parkhill J."/>
            <person name="Barrell B.G."/>
            <person name="Cole S.T."/>
            <person name="Gordon S.V."/>
            <person name="Hewinson R.G."/>
        </authorList>
    </citation>
    <scope>NUCLEOTIDE SEQUENCE [LARGE SCALE GENOMIC DNA]</scope>
    <source>
        <strain>ATCC BAA-935 / AF2122/97</strain>
    </source>
</reference>
<reference key="2">
    <citation type="journal article" date="2017" name="Genome Announc.">
        <title>Updated reference genome sequence and annotation of Mycobacterium bovis AF2122/97.</title>
        <authorList>
            <person name="Malone K.M."/>
            <person name="Farrell D."/>
            <person name="Stuber T.P."/>
            <person name="Schubert O.T."/>
            <person name="Aebersold R."/>
            <person name="Robbe-Austerman S."/>
            <person name="Gordon S.V."/>
        </authorList>
    </citation>
    <scope>NUCLEOTIDE SEQUENCE [LARGE SCALE GENOMIC DNA]</scope>
    <scope>GENOME REANNOTATION</scope>
    <source>
        <strain>ATCC BAA-935 / AF2122/97</strain>
    </source>
</reference>
<evidence type="ECO:0000255" key="1">
    <source>
        <dbReference type="HAMAP-Rule" id="MF_00272"/>
    </source>
</evidence>
<evidence type="ECO:0000255" key="2">
    <source>
        <dbReference type="PROSITE-ProRule" id="PRU01066"/>
    </source>
</evidence>
<protein>
    <recommendedName>
        <fullName evidence="1">Glycine cleavage system H protein</fullName>
    </recommendedName>
</protein>
<sequence length="134" mass="14180">MSDIPSDLHYTAEHEWIRRSGDDTVRVGITDYAQSALGDVVFVQLPVIGTAVTAGETFGEVESTKSVSDLYAPISGKVSAVNSDLDGTPQLVNSDPYGAGWLLDIQVDSSDVAALESALTTLLDAEAYRGTLTE</sequence>
<feature type="chain" id="PRO_0000166226" description="Glycine cleavage system H protein">
    <location>
        <begin position="1"/>
        <end position="134"/>
    </location>
</feature>
<feature type="domain" description="Lipoyl-binding" evidence="2">
    <location>
        <begin position="24"/>
        <end position="106"/>
    </location>
</feature>
<feature type="modified residue" description="N6-lipoyllysine" evidence="1">
    <location>
        <position position="65"/>
    </location>
</feature>
<organism>
    <name type="scientific">Mycobacterium bovis (strain ATCC BAA-935 / AF2122/97)</name>
    <dbReference type="NCBI Taxonomy" id="233413"/>
    <lineage>
        <taxon>Bacteria</taxon>
        <taxon>Bacillati</taxon>
        <taxon>Actinomycetota</taxon>
        <taxon>Actinomycetes</taxon>
        <taxon>Mycobacteriales</taxon>
        <taxon>Mycobacteriaceae</taxon>
        <taxon>Mycobacterium</taxon>
        <taxon>Mycobacterium tuberculosis complex</taxon>
    </lineage>
</organism>
<dbReference type="EMBL" id="LT708304">
    <property type="protein sequence ID" value="SIU00461.1"/>
    <property type="molecule type" value="Genomic_DNA"/>
</dbReference>
<dbReference type="RefSeq" id="NP_855509.1">
    <property type="nucleotide sequence ID" value="NC_002945.3"/>
</dbReference>
<dbReference type="RefSeq" id="WP_003409234.1">
    <property type="nucleotide sequence ID" value="NC_002945.4"/>
</dbReference>
<dbReference type="SMR" id="Q7TZG8"/>
<dbReference type="KEGG" id="mbo:BQ2027_MB1857"/>
<dbReference type="PATRIC" id="fig|233413.5.peg.2037"/>
<dbReference type="Proteomes" id="UP000001419">
    <property type="component" value="Chromosome"/>
</dbReference>
<dbReference type="GO" id="GO:0005829">
    <property type="term" value="C:cytosol"/>
    <property type="evidence" value="ECO:0007669"/>
    <property type="project" value="TreeGrafter"/>
</dbReference>
<dbReference type="GO" id="GO:0005960">
    <property type="term" value="C:glycine cleavage complex"/>
    <property type="evidence" value="ECO:0007669"/>
    <property type="project" value="InterPro"/>
</dbReference>
<dbReference type="GO" id="GO:0019464">
    <property type="term" value="P:glycine decarboxylation via glycine cleavage system"/>
    <property type="evidence" value="ECO:0007669"/>
    <property type="project" value="UniProtKB-UniRule"/>
</dbReference>
<dbReference type="CDD" id="cd06848">
    <property type="entry name" value="GCS_H"/>
    <property type="match status" value="1"/>
</dbReference>
<dbReference type="Gene3D" id="2.40.50.100">
    <property type="match status" value="1"/>
</dbReference>
<dbReference type="HAMAP" id="MF_00272">
    <property type="entry name" value="GcvH"/>
    <property type="match status" value="1"/>
</dbReference>
<dbReference type="InterPro" id="IPR003016">
    <property type="entry name" value="2-oxoA_DH_lipoyl-BS"/>
</dbReference>
<dbReference type="InterPro" id="IPR000089">
    <property type="entry name" value="Biotin_lipoyl"/>
</dbReference>
<dbReference type="InterPro" id="IPR002930">
    <property type="entry name" value="GCV_H"/>
</dbReference>
<dbReference type="InterPro" id="IPR033753">
    <property type="entry name" value="GCV_H/Fam206"/>
</dbReference>
<dbReference type="InterPro" id="IPR017453">
    <property type="entry name" value="GCV_H_sub"/>
</dbReference>
<dbReference type="InterPro" id="IPR011053">
    <property type="entry name" value="Single_hybrid_motif"/>
</dbReference>
<dbReference type="NCBIfam" id="TIGR00527">
    <property type="entry name" value="gcvH"/>
    <property type="match status" value="1"/>
</dbReference>
<dbReference type="NCBIfam" id="NF002270">
    <property type="entry name" value="PRK01202.1"/>
    <property type="match status" value="1"/>
</dbReference>
<dbReference type="PANTHER" id="PTHR11715">
    <property type="entry name" value="GLYCINE CLEAVAGE SYSTEM H PROTEIN"/>
    <property type="match status" value="1"/>
</dbReference>
<dbReference type="PANTHER" id="PTHR11715:SF3">
    <property type="entry name" value="GLYCINE CLEAVAGE SYSTEM H PROTEIN-RELATED"/>
    <property type="match status" value="1"/>
</dbReference>
<dbReference type="Pfam" id="PF01597">
    <property type="entry name" value="GCV_H"/>
    <property type="match status" value="1"/>
</dbReference>
<dbReference type="SUPFAM" id="SSF51230">
    <property type="entry name" value="Single hybrid motif"/>
    <property type="match status" value="1"/>
</dbReference>
<dbReference type="PROSITE" id="PS50968">
    <property type="entry name" value="BIOTINYL_LIPOYL"/>
    <property type="match status" value="1"/>
</dbReference>
<dbReference type="PROSITE" id="PS00189">
    <property type="entry name" value="LIPOYL"/>
    <property type="match status" value="1"/>
</dbReference>
<accession>Q7TZG8</accession>
<accession>A0A1R3XZF4</accession>
<accession>X2BJ41</accession>
<gene>
    <name evidence="1" type="primary">gcvH</name>
    <name type="ordered locus">BQ2027_MB1857</name>
</gene>
<comment type="function">
    <text evidence="1">The glycine cleavage system catalyzes the degradation of glycine. The H protein shuttles the methylamine group of glycine from the P protein to the T protein.</text>
</comment>
<comment type="cofactor">
    <cofactor evidence="1">
        <name>(R)-lipoate</name>
        <dbReference type="ChEBI" id="CHEBI:83088"/>
    </cofactor>
    <text evidence="1">Binds 1 lipoyl cofactor covalently.</text>
</comment>
<comment type="subunit">
    <text evidence="1">The glycine cleavage system is composed of four proteins: P, T, L and H.</text>
</comment>
<comment type="similarity">
    <text evidence="1">Belongs to the GcvH family.</text>
</comment>
<proteinExistence type="inferred from homology"/>
<keyword id="KW-0450">Lipoyl</keyword>
<keyword id="KW-1185">Reference proteome</keyword>
<name>GCSH_MYCBO</name>